<proteinExistence type="evidence at transcript level"/>
<reference key="1">
    <citation type="journal article" date="1996" name="Mol. Cell. Endocrinol.">
        <title>Structure and expression of the mouse oxytocin receptor gene.</title>
        <authorList>
            <person name="Kubota Y."/>
            <person name="Kimura T."/>
            <person name="Hashimoto K."/>
            <person name="Tokugawa Y."/>
            <person name="Nobunaga K."/>
            <person name="Azuma C."/>
            <person name="Saji F."/>
            <person name="Murata Y."/>
        </authorList>
    </citation>
    <scope>NUCLEOTIDE SEQUENCE [GENOMIC DNA / MRNA]</scope>
    <source>
        <strain>129/Sv</strain>
    </source>
</reference>
<reference key="2">
    <citation type="journal article" date="2009" name="PLoS Biol.">
        <title>Lineage-specific biology revealed by a finished genome assembly of the mouse.</title>
        <authorList>
            <person name="Church D.M."/>
            <person name="Goodstadt L."/>
            <person name="Hillier L.W."/>
            <person name="Zody M.C."/>
            <person name="Goldstein S."/>
            <person name="She X."/>
            <person name="Bult C.J."/>
            <person name="Agarwala R."/>
            <person name="Cherry J.L."/>
            <person name="DiCuccio M."/>
            <person name="Hlavina W."/>
            <person name="Kapustin Y."/>
            <person name="Meric P."/>
            <person name="Maglott D."/>
            <person name="Birtle Z."/>
            <person name="Marques A.C."/>
            <person name="Graves T."/>
            <person name="Zhou S."/>
            <person name="Teague B."/>
            <person name="Potamousis K."/>
            <person name="Churas C."/>
            <person name="Place M."/>
            <person name="Herschleb J."/>
            <person name="Runnheim R."/>
            <person name="Forrest D."/>
            <person name="Amos-Landgraf J."/>
            <person name="Schwartz D.C."/>
            <person name="Cheng Z."/>
            <person name="Lindblad-Toh K."/>
            <person name="Eichler E.E."/>
            <person name="Ponting C.P."/>
        </authorList>
    </citation>
    <scope>NUCLEOTIDE SEQUENCE [LARGE SCALE GENOMIC DNA]</scope>
    <source>
        <strain>C57BL/6J</strain>
    </source>
</reference>
<comment type="function">
    <text>Receptor for oxytocin. The activity of this receptor is mediated by G proteins which activate a phosphatidylinositol-calcium second messenger system.</text>
</comment>
<comment type="subcellular location">
    <subcellularLocation>
        <location>Cell membrane</location>
        <topology>Multi-pass membrane protein</topology>
    </subcellularLocation>
</comment>
<comment type="similarity">
    <text evidence="3">Belongs to the G-protein coupled receptor 1 family. Vasopressin/oxytocin receptor subfamily.</text>
</comment>
<organism>
    <name type="scientific">Mus musculus</name>
    <name type="common">Mouse</name>
    <dbReference type="NCBI Taxonomy" id="10090"/>
    <lineage>
        <taxon>Eukaryota</taxon>
        <taxon>Metazoa</taxon>
        <taxon>Chordata</taxon>
        <taxon>Craniata</taxon>
        <taxon>Vertebrata</taxon>
        <taxon>Euteleostomi</taxon>
        <taxon>Mammalia</taxon>
        <taxon>Eutheria</taxon>
        <taxon>Euarchontoglires</taxon>
        <taxon>Glires</taxon>
        <taxon>Rodentia</taxon>
        <taxon>Myomorpha</taxon>
        <taxon>Muroidea</taxon>
        <taxon>Muridae</taxon>
        <taxon>Murinae</taxon>
        <taxon>Mus</taxon>
        <taxon>Mus</taxon>
    </lineage>
</organism>
<gene>
    <name type="primary">Oxtr</name>
</gene>
<accession>P97926</accession>
<accession>F8VQ78</accession>
<evidence type="ECO:0000250" key="1">
    <source>
        <dbReference type="UniProtKB" id="P70536"/>
    </source>
</evidence>
<evidence type="ECO:0000255" key="2"/>
<evidence type="ECO:0000255" key="3">
    <source>
        <dbReference type="PROSITE-ProRule" id="PRU00521"/>
    </source>
</evidence>
<evidence type="ECO:0000256" key="4">
    <source>
        <dbReference type="SAM" id="MobiDB-lite"/>
    </source>
</evidence>
<evidence type="ECO:0000305" key="5"/>
<protein>
    <recommendedName>
        <fullName>Oxytocin receptor</fullName>
        <shortName>OT-R</shortName>
    </recommendedName>
</protein>
<keyword id="KW-1003">Cell membrane</keyword>
<keyword id="KW-1015">Disulfide bond</keyword>
<keyword id="KW-0297">G-protein coupled receptor</keyword>
<keyword id="KW-0325">Glycoprotein</keyword>
<keyword id="KW-0472">Membrane</keyword>
<keyword id="KW-0597">Phosphoprotein</keyword>
<keyword id="KW-0675">Receptor</keyword>
<keyword id="KW-1185">Reference proteome</keyword>
<keyword id="KW-0807">Transducer</keyword>
<keyword id="KW-0812">Transmembrane</keyword>
<keyword id="KW-1133">Transmembrane helix</keyword>
<dbReference type="EMBL" id="D86599">
    <property type="protein sequence ID" value="BAA18995.1"/>
    <property type="molecule type" value="mRNA"/>
</dbReference>
<dbReference type="EMBL" id="D86631">
    <property type="protein sequence ID" value="BAA18996.1"/>
    <property type="molecule type" value="Genomic_DNA"/>
</dbReference>
<dbReference type="EMBL" id="AC153594">
    <property type="status" value="NOT_ANNOTATED_CDS"/>
    <property type="molecule type" value="Genomic_DNA"/>
</dbReference>
<dbReference type="CCDS" id="CCDS39588.1"/>
<dbReference type="RefSeq" id="NP_001074616.1">
    <property type="nucleotide sequence ID" value="NM_001081147.3"/>
</dbReference>
<dbReference type="RefSeq" id="XP_006505786.1">
    <property type="nucleotide sequence ID" value="XM_006505723.1"/>
</dbReference>
<dbReference type="RefSeq" id="XP_036021816.1">
    <property type="nucleotide sequence ID" value="XM_036165923.1"/>
</dbReference>
<dbReference type="SMR" id="P97926"/>
<dbReference type="CORUM" id="P97926"/>
<dbReference type="FunCoup" id="P97926">
    <property type="interactions" value="779"/>
</dbReference>
<dbReference type="STRING" id="10090.ENSMUSP00000051132"/>
<dbReference type="BindingDB" id="P97926"/>
<dbReference type="ChEMBL" id="CHEMBL3243907"/>
<dbReference type="DrugCentral" id="P97926"/>
<dbReference type="GuidetoPHARMACOLOGY" id="369"/>
<dbReference type="GlyCosmos" id="P97926">
    <property type="glycosylation" value="2 sites, No reported glycans"/>
</dbReference>
<dbReference type="GlyGen" id="P97926">
    <property type="glycosylation" value="2 sites"/>
</dbReference>
<dbReference type="iPTMnet" id="P97926"/>
<dbReference type="PhosphoSitePlus" id="P97926"/>
<dbReference type="SwissPalm" id="P97926"/>
<dbReference type="PaxDb" id="10090-ENSMUSP00000051132"/>
<dbReference type="ProteomicsDB" id="294414"/>
<dbReference type="Antibodypedia" id="10144">
    <property type="antibodies" value="365 antibodies from 34 providers"/>
</dbReference>
<dbReference type="DNASU" id="18430"/>
<dbReference type="Ensembl" id="ENSMUST00000053306.8">
    <property type="protein sequence ID" value="ENSMUSP00000051132.7"/>
    <property type="gene ID" value="ENSMUSG00000049112.10"/>
</dbReference>
<dbReference type="GeneID" id="18430"/>
<dbReference type="KEGG" id="mmu:18430"/>
<dbReference type="UCSC" id="uc009deb.1">
    <property type="organism name" value="mouse"/>
</dbReference>
<dbReference type="AGR" id="MGI:109147"/>
<dbReference type="CTD" id="5021"/>
<dbReference type="MGI" id="MGI:109147">
    <property type="gene designation" value="Oxtr"/>
</dbReference>
<dbReference type="VEuPathDB" id="HostDB:ENSMUSG00000049112"/>
<dbReference type="eggNOG" id="KOG3656">
    <property type="taxonomic scope" value="Eukaryota"/>
</dbReference>
<dbReference type="GeneTree" id="ENSGT01050000244882"/>
<dbReference type="HOGENOM" id="CLU_009579_15_3_1"/>
<dbReference type="InParanoid" id="P97926"/>
<dbReference type="OMA" id="HLFHELM"/>
<dbReference type="OrthoDB" id="6435638at2759"/>
<dbReference type="PhylomeDB" id="P97926"/>
<dbReference type="TreeFam" id="TF106499"/>
<dbReference type="Reactome" id="R-MMU-388479">
    <property type="pathway name" value="Vasopressin-like receptors"/>
</dbReference>
<dbReference type="Reactome" id="R-MMU-416476">
    <property type="pathway name" value="G alpha (q) signalling events"/>
</dbReference>
<dbReference type="BioGRID-ORCS" id="18430">
    <property type="hits" value="4 hits in 79 CRISPR screens"/>
</dbReference>
<dbReference type="PRO" id="PR:P97926"/>
<dbReference type="Proteomes" id="UP000000589">
    <property type="component" value="Chromosome 6"/>
</dbReference>
<dbReference type="RNAct" id="P97926">
    <property type="molecule type" value="protein"/>
</dbReference>
<dbReference type="Bgee" id="ENSMUSG00000049112">
    <property type="expression patterns" value="Expressed in metanephric renal vesicle and 88 other cell types or tissues"/>
</dbReference>
<dbReference type="ExpressionAtlas" id="P97926">
    <property type="expression patterns" value="baseline and differential"/>
</dbReference>
<dbReference type="GO" id="GO:0005886">
    <property type="term" value="C:plasma membrane"/>
    <property type="evidence" value="ECO:0007669"/>
    <property type="project" value="UniProtKB-SubCell"/>
</dbReference>
<dbReference type="GO" id="GO:0004990">
    <property type="term" value="F:oxytocin receptor activity"/>
    <property type="evidence" value="ECO:0007669"/>
    <property type="project" value="InterPro"/>
</dbReference>
<dbReference type="GO" id="GO:0005000">
    <property type="term" value="F:vasopressin receptor activity"/>
    <property type="evidence" value="ECO:0007669"/>
    <property type="project" value="InterPro"/>
</dbReference>
<dbReference type="GO" id="GO:0045777">
    <property type="term" value="P:positive regulation of blood pressure"/>
    <property type="evidence" value="ECO:0000316"/>
    <property type="project" value="MGI"/>
</dbReference>
<dbReference type="GO" id="GO:0120162">
    <property type="term" value="P:positive regulation of cold-induced thermogenesis"/>
    <property type="evidence" value="ECO:0000315"/>
    <property type="project" value="YuBioLab"/>
</dbReference>
<dbReference type="CDD" id="cd15387">
    <property type="entry name" value="7tmA_OT_R"/>
    <property type="match status" value="1"/>
</dbReference>
<dbReference type="FunFam" id="1.20.1070.10:FF:000145">
    <property type="entry name" value="Oxytocin receptor"/>
    <property type="match status" value="1"/>
</dbReference>
<dbReference type="Gene3D" id="1.20.1070.10">
    <property type="entry name" value="Rhodopsin 7-helix transmembrane proteins"/>
    <property type="match status" value="1"/>
</dbReference>
<dbReference type="InterPro" id="IPR000276">
    <property type="entry name" value="GPCR_Rhodpsn"/>
</dbReference>
<dbReference type="InterPro" id="IPR017452">
    <property type="entry name" value="GPCR_Rhodpsn_7TM"/>
</dbReference>
<dbReference type="InterPro" id="IPR002062">
    <property type="entry name" value="Oxytocn_rcpt"/>
</dbReference>
<dbReference type="InterPro" id="IPR001817">
    <property type="entry name" value="Vasoprsn_rcpt"/>
</dbReference>
<dbReference type="PANTHER" id="PTHR24241">
    <property type="entry name" value="NEUROPEPTIDE RECEPTOR-RELATED G-PROTEIN COUPLED RECEPTOR"/>
    <property type="match status" value="1"/>
</dbReference>
<dbReference type="PANTHER" id="PTHR24241:SF89">
    <property type="entry name" value="OXYTOCIN RECEPTOR"/>
    <property type="match status" value="1"/>
</dbReference>
<dbReference type="Pfam" id="PF00001">
    <property type="entry name" value="7tm_1"/>
    <property type="match status" value="1"/>
</dbReference>
<dbReference type="PRINTS" id="PR00237">
    <property type="entry name" value="GPCRRHODOPSN"/>
</dbReference>
<dbReference type="PRINTS" id="PR00665">
    <property type="entry name" value="OXYTOCINR"/>
</dbReference>
<dbReference type="PRINTS" id="PR00896">
    <property type="entry name" value="VASOPRESSINR"/>
</dbReference>
<dbReference type="SUPFAM" id="SSF81321">
    <property type="entry name" value="Family A G protein-coupled receptor-like"/>
    <property type="match status" value="1"/>
</dbReference>
<dbReference type="PROSITE" id="PS00237">
    <property type="entry name" value="G_PROTEIN_RECEP_F1_1"/>
    <property type="match status" value="1"/>
</dbReference>
<dbReference type="PROSITE" id="PS50262">
    <property type="entry name" value="G_PROTEIN_RECEP_F1_2"/>
    <property type="match status" value="1"/>
</dbReference>
<feature type="chain" id="PRO_0000070000" description="Oxytocin receptor">
    <location>
        <begin position="1"/>
        <end position="388"/>
    </location>
</feature>
<feature type="topological domain" description="Extracellular" evidence="2">
    <location>
        <begin position="1"/>
        <end position="38"/>
    </location>
</feature>
<feature type="transmembrane region" description="Helical; Name=1" evidence="2">
    <location>
        <begin position="39"/>
        <end position="63"/>
    </location>
</feature>
<feature type="topological domain" description="Cytoplasmic" evidence="2">
    <location>
        <begin position="64"/>
        <end position="74"/>
    </location>
</feature>
<feature type="transmembrane region" description="Helical; Name=2" evidence="2">
    <location>
        <begin position="75"/>
        <end position="97"/>
    </location>
</feature>
<feature type="topological domain" description="Extracellular" evidence="2">
    <location>
        <begin position="98"/>
        <end position="113"/>
    </location>
</feature>
<feature type="transmembrane region" description="Helical; Name=3" evidence="2">
    <location>
        <begin position="114"/>
        <end position="135"/>
    </location>
</feature>
<feature type="topological domain" description="Cytoplasmic" evidence="2">
    <location>
        <begin position="136"/>
        <end position="154"/>
    </location>
</feature>
<feature type="transmembrane region" description="Helical; Name=4" evidence="2">
    <location>
        <begin position="155"/>
        <end position="175"/>
    </location>
</feature>
<feature type="topological domain" description="Extracellular" evidence="2">
    <location>
        <begin position="176"/>
        <end position="202"/>
    </location>
</feature>
<feature type="transmembrane region" description="Helical; Name=5" evidence="2">
    <location>
        <begin position="203"/>
        <end position="225"/>
    </location>
</feature>
<feature type="topological domain" description="Cytoplasmic" evidence="2">
    <location>
        <begin position="226"/>
        <end position="274"/>
    </location>
</feature>
<feature type="transmembrane region" description="Helical; Name=6" evidence="2">
    <location>
        <begin position="275"/>
        <end position="293"/>
    </location>
</feature>
<feature type="topological domain" description="Extracellular" evidence="2">
    <location>
        <begin position="294"/>
        <end position="308"/>
    </location>
</feature>
<feature type="transmembrane region" description="Helical; Name=7" evidence="2">
    <location>
        <begin position="309"/>
        <end position="331"/>
    </location>
</feature>
<feature type="topological domain" description="Cytoplasmic" evidence="2">
    <location>
        <begin position="332"/>
        <end position="388"/>
    </location>
</feature>
<feature type="region of interest" description="Disordered" evidence="4">
    <location>
        <begin position="354"/>
        <end position="388"/>
    </location>
</feature>
<feature type="compositionally biased region" description="Low complexity" evidence="4">
    <location>
        <begin position="365"/>
        <end position="388"/>
    </location>
</feature>
<feature type="modified residue" description="Phosphoserine" evidence="1">
    <location>
        <position position="365"/>
    </location>
</feature>
<feature type="modified residue" description="Phosphoserine" evidence="1">
    <location>
        <position position="367"/>
    </location>
</feature>
<feature type="glycosylation site" description="N-linked (GlcNAc...) asparagine" evidence="2">
    <location>
        <position position="8"/>
    </location>
</feature>
<feature type="glycosylation site" description="N-linked (GlcNAc...) asparagine" evidence="2">
    <location>
        <position position="26"/>
    </location>
</feature>
<feature type="disulfide bond" evidence="3">
    <location>
        <begin position="112"/>
        <end position="187"/>
    </location>
</feature>
<feature type="sequence conflict" description="In Ref. 1; BAA18995." evidence="5" ref="1">
    <original>R</original>
    <variation>C</variation>
    <location>
        <position position="375"/>
    </location>
</feature>
<sequence length="388" mass="42805">MEGTPAANWSIELDLGSGVPPGAEGNLTAGPPRRNEALARVEVAVLCLILFLALSGNACVLLALRTTRHKHSRLFFFMKHLSIADLVVAVFQVLPQLLWDITFRFYGPDLLCRLVKYLQVVGMFASTYLLLLMSLDRCLAICQPLRSLRRRTDRLAVLATWLGCLVASVPQVHIFSLREVADGVFDCWAVFIQPWGPKAYVTWITLAVYIVPVIVLAACYGLISFKIWQNLRLKTAAAAAAAEGSDAAGGAGRAALARVSSVKLISKAKIRTVKMTFIIVLAFIVCWTPFFFVQMWSVWDVNAPKEASAFIIAMLLASLNSCCNPWIYMLFTGHLFHELVQRFLCCSARYLKGSRPGETSISKKSNSSTFVLSRRSSSQRSCSQPSSA</sequence>
<name>OXYR_MOUSE</name>